<organism>
    <name type="scientific">Bos taurus</name>
    <name type="common">Bovine</name>
    <dbReference type="NCBI Taxonomy" id="9913"/>
    <lineage>
        <taxon>Eukaryota</taxon>
        <taxon>Metazoa</taxon>
        <taxon>Chordata</taxon>
        <taxon>Craniata</taxon>
        <taxon>Vertebrata</taxon>
        <taxon>Euteleostomi</taxon>
        <taxon>Mammalia</taxon>
        <taxon>Eutheria</taxon>
        <taxon>Laurasiatheria</taxon>
        <taxon>Artiodactyla</taxon>
        <taxon>Ruminantia</taxon>
        <taxon>Pecora</taxon>
        <taxon>Bovidae</taxon>
        <taxon>Bovinae</taxon>
        <taxon>Bos</taxon>
    </lineage>
</organism>
<evidence type="ECO:0000250" key="1"/>
<evidence type="ECO:0000250" key="2">
    <source>
        <dbReference type="UniProtKB" id="P05181"/>
    </source>
</evidence>
<evidence type="ECO:0000250" key="3">
    <source>
        <dbReference type="UniProtKB" id="P05182"/>
    </source>
</evidence>
<evidence type="ECO:0000305" key="4"/>
<protein>
    <recommendedName>
        <fullName>Cytochrome P450 2E1</fullName>
        <ecNumber evidence="2">1.14.14.1</ecNumber>
    </recommendedName>
    <alternativeName>
        <fullName>4-nitrophenol 2-hydroxylase</fullName>
        <ecNumber evidence="2">1.14.13.n7</ecNumber>
    </alternativeName>
    <alternativeName>
        <fullName>CYPIIE1</fullName>
    </alternativeName>
</protein>
<proteinExistence type="evidence at transcript level"/>
<feature type="chain" id="PRO_0000051750" description="Cytochrome P450 2E1">
    <location>
        <begin position="1"/>
        <end position="495"/>
    </location>
</feature>
<feature type="binding site" evidence="1">
    <location>
        <begin position="298"/>
        <end position="303"/>
    </location>
    <ligand>
        <name>substrate</name>
    </ligand>
</feature>
<feature type="binding site" description="axial binding residue" evidence="1">
    <location>
        <position position="437"/>
    </location>
    <ligand>
        <name>heme</name>
        <dbReference type="ChEBI" id="CHEBI:30413"/>
    </ligand>
    <ligandPart>
        <name>Fe</name>
        <dbReference type="ChEBI" id="CHEBI:18248"/>
    </ligandPart>
</feature>
<name>CP2E1_BOVIN</name>
<dbReference type="EC" id="1.14.14.1" evidence="2"/>
<dbReference type="EC" id="1.14.13.n7" evidence="2"/>
<dbReference type="EMBL" id="AJ001715">
    <property type="protein sequence ID" value="CAA04948.1"/>
    <property type="molecule type" value="mRNA"/>
</dbReference>
<dbReference type="EMBL" id="DQ058608">
    <property type="protein sequence ID" value="AAY83882.1"/>
    <property type="molecule type" value="mRNA"/>
</dbReference>
<dbReference type="EMBL" id="DQ058605">
    <property type="protein sequence ID" value="AAY83880.1"/>
    <property type="molecule type" value="Genomic_DNA"/>
</dbReference>
<dbReference type="RefSeq" id="NP_776955.2">
    <property type="nucleotide sequence ID" value="NM_174530.3"/>
</dbReference>
<dbReference type="SMR" id="O18963"/>
<dbReference type="FunCoup" id="O18963">
    <property type="interactions" value="211"/>
</dbReference>
<dbReference type="STRING" id="9913.ENSBTAP00000024437"/>
<dbReference type="PaxDb" id="9913-ENSBTAP00000024437"/>
<dbReference type="PeptideAtlas" id="O18963"/>
<dbReference type="GeneID" id="282213"/>
<dbReference type="KEGG" id="bta:282213"/>
<dbReference type="CTD" id="1571"/>
<dbReference type="eggNOG" id="KOG0156">
    <property type="taxonomic scope" value="Eukaryota"/>
</dbReference>
<dbReference type="InParanoid" id="O18963"/>
<dbReference type="OrthoDB" id="1103324at2759"/>
<dbReference type="UniPathway" id="UPA00199"/>
<dbReference type="Proteomes" id="UP000009136">
    <property type="component" value="Unplaced"/>
</dbReference>
<dbReference type="GO" id="GO:0005737">
    <property type="term" value="C:cytoplasm"/>
    <property type="evidence" value="ECO:0000318"/>
    <property type="project" value="GO_Central"/>
</dbReference>
<dbReference type="GO" id="GO:0005789">
    <property type="term" value="C:endoplasmic reticulum membrane"/>
    <property type="evidence" value="ECO:0007669"/>
    <property type="project" value="UniProtKB-SubCell"/>
</dbReference>
<dbReference type="GO" id="GO:0043231">
    <property type="term" value="C:intracellular membrane-bounded organelle"/>
    <property type="evidence" value="ECO:0000318"/>
    <property type="project" value="GO_Central"/>
</dbReference>
<dbReference type="GO" id="GO:0005743">
    <property type="term" value="C:mitochondrial inner membrane"/>
    <property type="evidence" value="ECO:0000250"/>
    <property type="project" value="UniProtKB"/>
</dbReference>
<dbReference type="GO" id="GO:0008392">
    <property type="term" value="F:arachidonate epoxygenase activity"/>
    <property type="evidence" value="ECO:0000318"/>
    <property type="project" value="GO_Central"/>
</dbReference>
<dbReference type="GO" id="GO:0020037">
    <property type="term" value="F:heme binding"/>
    <property type="evidence" value="ECO:0000250"/>
    <property type="project" value="UniProtKB"/>
</dbReference>
<dbReference type="GO" id="GO:0030544">
    <property type="term" value="F:Hsp70 protein binding"/>
    <property type="evidence" value="ECO:0000250"/>
    <property type="project" value="UniProtKB"/>
</dbReference>
<dbReference type="GO" id="GO:0051879">
    <property type="term" value="F:Hsp90 protein binding"/>
    <property type="evidence" value="ECO:0000250"/>
    <property type="project" value="UniProtKB"/>
</dbReference>
<dbReference type="GO" id="GO:0005506">
    <property type="term" value="F:iron ion binding"/>
    <property type="evidence" value="ECO:0007669"/>
    <property type="project" value="InterPro"/>
</dbReference>
<dbReference type="GO" id="GO:0016712">
    <property type="term" value="F:oxidoreductase activity, acting on paired donors, with incorporation or reduction of molecular oxygen, reduced flavin or flavoprotein as one donor, and incorporation of one atom of oxygen"/>
    <property type="evidence" value="ECO:0000318"/>
    <property type="project" value="GO_Central"/>
</dbReference>
<dbReference type="GO" id="GO:0019373">
    <property type="term" value="P:epoxygenase P450 pathway"/>
    <property type="evidence" value="ECO:0000318"/>
    <property type="project" value="GO_Central"/>
</dbReference>
<dbReference type="GO" id="GO:0006805">
    <property type="term" value="P:xenobiotic metabolic process"/>
    <property type="evidence" value="ECO:0000318"/>
    <property type="project" value="GO_Central"/>
</dbReference>
<dbReference type="CDD" id="cd20665">
    <property type="entry name" value="CYP2C-like"/>
    <property type="match status" value="1"/>
</dbReference>
<dbReference type="FunFam" id="1.10.630.10:FF:000001">
    <property type="entry name" value="Cytochrome P450, family 2"/>
    <property type="match status" value="1"/>
</dbReference>
<dbReference type="Gene3D" id="1.10.630.10">
    <property type="entry name" value="Cytochrome P450"/>
    <property type="match status" value="1"/>
</dbReference>
<dbReference type="InterPro" id="IPR001128">
    <property type="entry name" value="Cyt_P450"/>
</dbReference>
<dbReference type="InterPro" id="IPR017972">
    <property type="entry name" value="Cyt_P450_CS"/>
</dbReference>
<dbReference type="InterPro" id="IPR002401">
    <property type="entry name" value="Cyt_P450_E_grp-I"/>
</dbReference>
<dbReference type="InterPro" id="IPR008070">
    <property type="entry name" value="Cyt_P450_E_grp-I_CYP2E-like"/>
</dbReference>
<dbReference type="InterPro" id="IPR036396">
    <property type="entry name" value="Cyt_P450_sf"/>
</dbReference>
<dbReference type="InterPro" id="IPR050182">
    <property type="entry name" value="Cytochrome_P450_fam2"/>
</dbReference>
<dbReference type="PANTHER" id="PTHR24300:SF356">
    <property type="entry name" value="CYTOCHROME P450 2E1"/>
    <property type="match status" value="1"/>
</dbReference>
<dbReference type="PANTHER" id="PTHR24300">
    <property type="entry name" value="CYTOCHROME P450 508A4-RELATED"/>
    <property type="match status" value="1"/>
</dbReference>
<dbReference type="Pfam" id="PF00067">
    <property type="entry name" value="p450"/>
    <property type="match status" value="1"/>
</dbReference>
<dbReference type="PRINTS" id="PR00463">
    <property type="entry name" value="EP450I"/>
</dbReference>
<dbReference type="PRINTS" id="PR01687">
    <property type="entry name" value="EP450ICYP2E"/>
</dbReference>
<dbReference type="PRINTS" id="PR00385">
    <property type="entry name" value="P450"/>
</dbReference>
<dbReference type="SUPFAM" id="SSF48264">
    <property type="entry name" value="Cytochrome P450"/>
    <property type="match status" value="1"/>
</dbReference>
<dbReference type="PROSITE" id="PS00086">
    <property type="entry name" value="CYTOCHROME_P450"/>
    <property type="match status" value="1"/>
</dbReference>
<accession>O18963</accession>
<accession>Q4PS78</accession>
<sequence>MAALGITVALLVWMATLLFISIWKHIYSSWKLPPGPFPLPIIGNLLQLDIKNIPKSFTRLAERYGPVFTLYLGSQRAVVVHGYKPVKEVLLDYKNEFSGRGENPGFQMHKNNGIIFNNGSTWRDTRRFSLTTLRDLGMGKQGNEQRIQREAHFLLEVLRKTQGQPFDPTFVVGFAPYNVISDILFHKRFDYKDQTSLRLMSLFNENFYLLSSPWIQLYNNFPDYLQYLPGSHRKLLKNVSEVKSYALERVKDHQKSLEPSCPRGFLDTMLIEMAKERHSVDPMYTLENIAVTVADLLFAGTETTSTTLRYGLLILMKYPEVEEKLHEEIDRVIGPSRIPAVKDRLDMPYLDAVVHEIQRFIDLLPSNLLHEATQDTVFRGYVIPKGTVVIPTLDSVLHDRQEFPEPEKFKPEHFLNENGKFKYSDHFKAFSAGKRVCVGEGLARMELFLLLAAILQHFNLKSLVDPKDIDLSPIAIGFGKIPPRYKLCLIPRSKV</sequence>
<gene>
    <name type="primary">CYP2E1</name>
    <name type="synonym">CYP2E</name>
</gene>
<comment type="function">
    <text evidence="2">A cytochrome P450 monooxygenase involved in the metabolism of fatty acids. Mechanistically, uses molecular oxygen inserting one oxygen atom into a substrate, and reducing the second into a water molecule, with two electrons provided by NADPH via cytochrome P450 reductase (NADPH--hemoprotein reductase). Catalyzes the hydroxylation of carbon-hydrogen bonds. Hydroxylates fatty acids specifically at the omega-1 position displaying the highest catalytic activity for saturated fatty acids. May be involved in the oxidative metabolism of xenobiotics.</text>
</comment>
<comment type="catalytic activity">
    <reaction evidence="2">
        <text>an organic molecule + reduced [NADPH--hemoprotein reductase] + O2 = an alcohol + oxidized [NADPH--hemoprotein reductase] + H2O + H(+)</text>
        <dbReference type="Rhea" id="RHEA:17149"/>
        <dbReference type="Rhea" id="RHEA-COMP:11964"/>
        <dbReference type="Rhea" id="RHEA-COMP:11965"/>
        <dbReference type="ChEBI" id="CHEBI:15377"/>
        <dbReference type="ChEBI" id="CHEBI:15378"/>
        <dbReference type="ChEBI" id="CHEBI:15379"/>
        <dbReference type="ChEBI" id="CHEBI:30879"/>
        <dbReference type="ChEBI" id="CHEBI:57618"/>
        <dbReference type="ChEBI" id="CHEBI:58210"/>
        <dbReference type="ChEBI" id="CHEBI:142491"/>
        <dbReference type="EC" id="1.14.14.1"/>
    </reaction>
    <physiologicalReaction direction="left-to-right" evidence="2">
        <dbReference type="Rhea" id="RHEA:17150"/>
    </physiologicalReaction>
</comment>
<comment type="catalytic activity">
    <reaction evidence="2">
        <text>(5Z,8Z,11Z)-eicosatrienoate + reduced [NADPH--hemoprotein reductase] + O2 = 19-hydroxy-(5Z,8Z,11Z)-eicosatrienoate + oxidized [NADPH--hemoprotein reductase] + H2O + H(+)</text>
        <dbReference type="Rhea" id="RHEA:50076"/>
        <dbReference type="Rhea" id="RHEA-COMP:11964"/>
        <dbReference type="Rhea" id="RHEA-COMP:11965"/>
        <dbReference type="ChEBI" id="CHEBI:15377"/>
        <dbReference type="ChEBI" id="CHEBI:15378"/>
        <dbReference type="ChEBI" id="CHEBI:15379"/>
        <dbReference type="ChEBI" id="CHEBI:57618"/>
        <dbReference type="ChEBI" id="CHEBI:58210"/>
        <dbReference type="ChEBI" id="CHEBI:78043"/>
        <dbReference type="ChEBI" id="CHEBI:132024"/>
    </reaction>
    <physiologicalReaction direction="left-to-right" evidence="2">
        <dbReference type="Rhea" id="RHEA:50077"/>
    </physiologicalReaction>
</comment>
<comment type="catalytic activity">
    <reaction evidence="2">
        <text>(5Z,8Z,11Z,14Z,17Z)-eicosapentaenoate + reduced [NADPH--hemoprotein reductase] + O2 = 19-hydroxy-(5Z,8Z,11Z,14Z,17Z)-eicosapentaenoate + oxidized [NADPH--hemoprotein reductase] + H2O + H(+)</text>
        <dbReference type="Rhea" id="RHEA:39787"/>
        <dbReference type="Rhea" id="RHEA-COMP:11964"/>
        <dbReference type="Rhea" id="RHEA-COMP:11965"/>
        <dbReference type="ChEBI" id="CHEBI:15377"/>
        <dbReference type="ChEBI" id="CHEBI:15378"/>
        <dbReference type="ChEBI" id="CHEBI:15379"/>
        <dbReference type="ChEBI" id="CHEBI:57618"/>
        <dbReference type="ChEBI" id="CHEBI:58210"/>
        <dbReference type="ChEBI" id="CHEBI:58562"/>
        <dbReference type="ChEBI" id="CHEBI:76636"/>
    </reaction>
    <physiologicalReaction direction="left-to-right" evidence="2">
        <dbReference type="Rhea" id="RHEA:39788"/>
    </physiologicalReaction>
</comment>
<comment type="catalytic activity">
    <reaction evidence="2">
        <text>(4Z,7Z,10Z,13Z,16Z,19Z)-docosahexaenoate + reduced [NADPH--hemoprotein reductase] + O2 = 21-hydroxy-(4Z,7Z,10Z,13Z,16Z,19Z)-docosahexaenoate + oxidized [NADPH--hemoprotein reductase] + H2O + H(+)</text>
        <dbReference type="Rhea" id="RHEA:50088"/>
        <dbReference type="Rhea" id="RHEA-COMP:11964"/>
        <dbReference type="Rhea" id="RHEA-COMP:11965"/>
        <dbReference type="ChEBI" id="CHEBI:15377"/>
        <dbReference type="ChEBI" id="CHEBI:15378"/>
        <dbReference type="ChEBI" id="CHEBI:15379"/>
        <dbReference type="ChEBI" id="CHEBI:57618"/>
        <dbReference type="ChEBI" id="CHEBI:58210"/>
        <dbReference type="ChEBI" id="CHEBI:77016"/>
        <dbReference type="ChEBI" id="CHEBI:132025"/>
    </reaction>
    <physiologicalReaction direction="left-to-right" evidence="2">
        <dbReference type="Rhea" id="RHEA:50089"/>
    </physiologicalReaction>
</comment>
<comment type="catalytic activity">
    <reaction evidence="2">
        <text>dodecanoate + reduced [NADPH--hemoprotein reductase] + O2 = 11-hydroxydodecanoate + oxidized [NADPH--hemoprotein reductase] + H2O + H(+)</text>
        <dbReference type="Rhea" id="RHEA:39751"/>
        <dbReference type="Rhea" id="RHEA-COMP:11964"/>
        <dbReference type="Rhea" id="RHEA-COMP:11965"/>
        <dbReference type="ChEBI" id="CHEBI:15377"/>
        <dbReference type="ChEBI" id="CHEBI:15378"/>
        <dbReference type="ChEBI" id="CHEBI:15379"/>
        <dbReference type="ChEBI" id="CHEBI:18262"/>
        <dbReference type="ChEBI" id="CHEBI:57618"/>
        <dbReference type="ChEBI" id="CHEBI:58210"/>
        <dbReference type="ChEBI" id="CHEBI:76628"/>
    </reaction>
    <physiologicalReaction direction="left-to-right" evidence="2">
        <dbReference type="Rhea" id="RHEA:39752"/>
    </physiologicalReaction>
</comment>
<comment type="catalytic activity">
    <reaction evidence="2">
        <text>tetradecanoate + reduced [NADPH--hemoprotein reductase] + O2 = 13-hydroxytetradecanoate + oxidized [NADPH--hemoprotein reductase] + H2O + H(+)</text>
        <dbReference type="Rhea" id="RHEA:50096"/>
        <dbReference type="Rhea" id="RHEA-COMP:11964"/>
        <dbReference type="Rhea" id="RHEA-COMP:11965"/>
        <dbReference type="ChEBI" id="CHEBI:15377"/>
        <dbReference type="ChEBI" id="CHEBI:15378"/>
        <dbReference type="ChEBI" id="CHEBI:15379"/>
        <dbReference type="ChEBI" id="CHEBI:30807"/>
        <dbReference type="ChEBI" id="CHEBI:57618"/>
        <dbReference type="ChEBI" id="CHEBI:58210"/>
        <dbReference type="ChEBI" id="CHEBI:132031"/>
    </reaction>
    <physiologicalReaction direction="left-to-right" evidence="2">
        <dbReference type="Rhea" id="RHEA:50097"/>
    </physiologicalReaction>
</comment>
<comment type="catalytic activity">
    <reaction evidence="2">
        <text>4-nitrophenol + NADPH + O2 + H(+) = 4-nitrocatechol + NADP(+) + H2O</text>
        <dbReference type="Rhea" id="RHEA:26205"/>
        <dbReference type="ChEBI" id="CHEBI:15377"/>
        <dbReference type="ChEBI" id="CHEBI:15378"/>
        <dbReference type="ChEBI" id="CHEBI:15379"/>
        <dbReference type="ChEBI" id="CHEBI:57730"/>
        <dbReference type="ChEBI" id="CHEBI:57783"/>
        <dbReference type="ChEBI" id="CHEBI:57917"/>
        <dbReference type="ChEBI" id="CHEBI:58349"/>
        <dbReference type="EC" id="1.14.13.n7"/>
    </reaction>
    <physiologicalReaction direction="left-to-right" evidence="2">
        <dbReference type="Rhea" id="RHEA:26206"/>
    </physiologicalReaction>
</comment>
<comment type="cofactor">
    <cofactor evidence="1">
        <name>heme</name>
        <dbReference type="ChEBI" id="CHEBI:30413"/>
    </cofactor>
</comment>
<comment type="activity regulation">
    <text evidence="2">The omega-1 hydroxylase activity is stimulated by cytochrome b5.</text>
</comment>
<comment type="pathway">
    <text evidence="2">Lipid metabolism; fatty acid metabolism.</text>
</comment>
<comment type="subunit">
    <text evidence="3">Interacts with chaperones HSP70 and HSP90; this interaction is required for initial targeting to mitochondria.</text>
</comment>
<comment type="subcellular location">
    <subcellularLocation>
        <location evidence="3">Endoplasmic reticulum membrane</location>
        <topology evidence="3">Peripheral membrane protein</topology>
    </subcellularLocation>
    <subcellularLocation>
        <location evidence="3">Microsome membrane</location>
        <topology evidence="3">Peripheral membrane protein</topology>
    </subcellularLocation>
    <subcellularLocation>
        <location evidence="3">Mitochondrion inner membrane</location>
        <topology evidence="3">Peripheral membrane protein</topology>
    </subcellularLocation>
    <text evidence="3">Post-translationally targeted to mitochondria. TOMM70 is required for the translocation across the mitochondrial outer membrane. After translocation into the matrix, associates with the inner membrane as a membrane extrinsic protein.</text>
</comment>
<comment type="similarity">
    <text evidence="4">Belongs to the cytochrome P450 family.</text>
</comment>
<reference key="1">
    <citation type="submission" date="1997-10" db="EMBL/GenBank/DDBJ databases">
        <title>Isolation of a full length cytochrome P450 (CYP2E) cDNA sequence and its functional expression in V79 cells.</title>
        <authorList>
            <person name="van Raak M."/>
            <person name="Natsuhori M."/>
            <person name="Ligtenberg M."/>
            <person name="Kleij L."/>
            <person name="ten Berghe D."/>
            <person name="de Groene E.M."/>
            <person name="van Miert A.S."/>
            <person name="Witkamp R.F."/>
            <person name="Horbach G.J."/>
        </authorList>
    </citation>
    <scope>NUCLEOTIDE SEQUENCE [MRNA]</scope>
    <source>
        <strain>Hereford</strain>
        <tissue>Liver</tissue>
    </source>
</reference>
<reference key="2">
    <citation type="submission" date="2005-05" db="EMBL/GenBank/DDBJ databases">
        <title>Comparative mapping of the bovine SPRN locus.</title>
        <authorList>
            <person name="Ferretti L."/>
            <person name="Uboldi C."/>
            <person name="Del Vecchio I."/>
            <person name="Eggen A."/>
            <person name="Brunner R."/>
            <person name="Iannuzzi L."/>
        </authorList>
    </citation>
    <scope>NUCLEOTIDE SEQUENCE [GENOMIC DNA / MRNA]</scope>
</reference>
<keyword id="KW-0256">Endoplasmic reticulum</keyword>
<keyword id="KW-0276">Fatty acid metabolism</keyword>
<keyword id="KW-0349">Heme</keyword>
<keyword id="KW-0408">Iron</keyword>
<keyword id="KW-0443">Lipid metabolism</keyword>
<keyword id="KW-0472">Membrane</keyword>
<keyword id="KW-0479">Metal-binding</keyword>
<keyword id="KW-0492">Microsome</keyword>
<keyword id="KW-0496">Mitochondrion</keyword>
<keyword id="KW-0999">Mitochondrion inner membrane</keyword>
<keyword id="KW-0503">Monooxygenase</keyword>
<keyword id="KW-0521">NADP</keyword>
<keyword id="KW-0560">Oxidoreductase</keyword>
<keyword id="KW-1185">Reference proteome</keyword>